<gene>
    <name evidence="1" type="primary">cbiD</name>
    <name type="ordered locus">TT_P0008</name>
</gene>
<evidence type="ECO:0000255" key="1">
    <source>
        <dbReference type="HAMAP-Rule" id="MF_00787"/>
    </source>
</evidence>
<feature type="chain" id="PRO_0000141688" description="Cobalt-precorrin-5B C(1)-methyltransferase">
    <location>
        <begin position="1"/>
        <end position="366"/>
    </location>
</feature>
<proteinExistence type="inferred from homology"/>
<dbReference type="EC" id="2.1.1.195" evidence="1"/>
<dbReference type="EMBL" id="AE017222">
    <property type="protein sequence ID" value="AAS82338.1"/>
    <property type="molecule type" value="Genomic_DNA"/>
</dbReference>
<dbReference type="RefSeq" id="WP_008631402.1">
    <property type="nucleotide sequence ID" value="NZ_CP133180.1"/>
</dbReference>
<dbReference type="SMR" id="P61989"/>
<dbReference type="KEGG" id="tth:TT_P0008"/>
<dbReference type="eggNOG" id="COG1903">
    <property type="taxonomic scope" value="Bacteria"/>
</dbReference>
<dbReference type="HOGENOM" id="CLU_041273_0_0_0"/>
<dbReference type="OrthoDB" id="6439987at2"/>
<dbReference type="UniPathway" id="UPA00148">
    <property type="reaction ID" value="UER00227"/>
</dbReference>
<dbReference type="Proteomes" id="UP000000592">
    <property type="component" value="Plasmid pTT27"/>
</dbReference>
<dbReference type="GO" id="GO:0043780">
    <property type="term" value="F:cobalt-precorrin-5B C1-methyltransferase activity"/>
    <property type="evidence" value="ECO:0007669"/>
    <property type="project" value="RHEA"/>
</dbReference>
<dbReference type="GO" id="GO:0019251">
    <property type="term" value="P:anaerobic cobalamin biosynthetic process"/>
    <property type="evidence" value="ECO:0007669"/>
    <property type="project" value="UniProtKB-UniRule"/>
</dbReference>
<dbReference type="GO" id="GO:0032259">
    <property type="term" value="P:methylation"/>
    <property type="evidence" value="ECO:0007669"/>
    <property type="project" value="UniProtKB-KW"/>
</dbReference>
<dbReference type="Gene3D" id="3.30.2110.10">
    <property type="entry name" value="CbiD-like"/>
    <property type="match status" value="1"/>
</dbReference>
<dbReference type="HAMAP" id="MF_00787">
    <property type="entry name" value="CbiD"/>
    <property type="match status" value="1"/>
</dbReference>
<dbReference type="InterPro" id="IPR002748">
    <property type="entry name" value="CbiD"/>
</dbReference>
<dbReference type="InterPro" id="IPR036074">
    <property type="entry name" value="CbiD_sf"/>
</dbReference>
<dbReference type="NCBIfam" id="TIGR00312">
    <property type="entry name" value="cbiD"/>
    <property type="match status" value="1"/>
</dbReference>
<dbReference type="NCBIfam" id="NF000849">
    <property type="entry name" value="PRK00075.1-1"/>
    <property type="match status" value="1"/>
</dbReference>
<dbReference type="PANTHER" id="PTHR35863">
    <property type="entry name" value="COBALT-PRECORRIN-5B C(1)-METHYLTRANSFERASE"/>
    <property type="match status" value="1"/>
</dbReference>
<dbReference type="PANTHER" id="PTHR35863:SF1">
    <property type="entry name" value="COBALT-PRECORRIN-5B C(1)-METHYLTRANSFERASE"/>
    <property type="match status" value="1"/>
</dbReference>
<dbReference type="Pfam" id="PF01888">
    <property type="entry name" value="CbiD"/>
    <property type="match status" value="1"/>
</dbReference>
<dbReference type="PIRSF" id="PIRSF026782">
    <property type="entry name" value="CbiD"/>
    <property type="match status" value="1"/>
</dbReference>
<dbReference type="SUPFAM" id="SSF111342">
    <property type="entry name" value="CbiD-like"/>
    <property type="match status" value="1"/>
</dbReference>
<geneLocation type="plasmid">
    <name>pTT27</name>
</geneLocation>
<reference key="1">
    <citation type="journal article" date="2004" name="Nat. Biotechnol.">
        <title>The genome sequence of the extreme thermophile Thermus thermophilus.</title>
        <authorList>
            <person name="Henne A."/>
            <person name="Brueggemann H."/>
            <person name="Raasch C."/>
            <person name="Wiezer A."/>
            <person name="Hartsch T."/>
            <person name="Liesegang H."/>
            <person name="Johann A."/>
            <person name="Lienard T."/>
            <person name="Gohl O."/>
            <person name="Martinez-Arias R."/>
            <person name="Jacobi C."/>
            <person name="Starkuviene V."/>
            <person name="Schlenczeck S."/>
            <person name="Dencker S."/>
            <person name="Huber R."/>
            <person name="Klenk H.-P."/>
            <person name="Kramer W."/>
            <person name="Merkl R."/>
            <person name="Gottschalk G."/>
            <person name="Fritz H.-J."/>
        </authorList>
    </citation>
    <scope>NUCLEOTIDE SEQUENCE [LARGE SCALE GENOMIC DNA]</scope>
    <source>
        <strain>ATCC BAA-163 / DSM 7039 / HB27</strain>
    </source>
</reference>
<sequence length="366" mass="38946">MSHPYPPPRDKKGSRIGFTTGANAAAAAKAAALALLGEAPEVVDIWLPAGWRQPFRVFRLERKGDGVLVGMIKDAGDDPDVTHGAEIQAFVRFASEDRLEGGEGVGVVTKPGLGVPVGEPAINPVPRRMIWEAVREVTERPLAVTIAIPGGEELAKKTLNPRLGILGGLSVLGTTGVVKPYSTSAFRMSVVQAVGVARANGLLEIAATTGGKSERFAQRLLPHLPEMAFIEMGDFVGDVLRAARKVGVEVVRVVGMIGKISKMADGKTMTHAAGGEVNLSLLLSLLKEAGASPKALKEAEGAATARRFLEIALEEGLELFFVNLVRLAQEKLQAYIGERPFVSVALTDFDEGRCLAAWPDREVYRG</sequence>
<accession>P61989</accession>
<organism>
    <name type="scientific">Thermus thermophilus (strain ATCC BAA-163 / DSM 7039 / HB27)</name>
    <dbReference type="NCBI Taxonomy" id="262724"/>
    <lineage>
        <taxon>Bacteria</taxon>
        <taxon>Thermotogati</taxon>
        <taxon>Deinococcota</taxon>
        <taxon>Deinococci</taxon>
        <taxon>Thermales</taxon>
        <taxon>Thermaceae</taxon>
        <taxon>Thermus</taxon>
    </lineage>
</organism>
<comment type="function">
    <text evidence="1">Catalyzes the methylation of C-1 in cobalt-precorrin-5B to form cobalt-precorrin-6A.</text>
</comment>
<comment type="catalytic activity">
    <reaction evidence="1">
        <text>Co-precorrin-5B + S-adenosyl-L-methionine = Co-precorrin-6A + S-adenosyl-L-homocysteine</text>
        <dbReference type="Rhea" id="RHEA:26285"/>
        <dbReference type="ChEBI" id="CHEBI:57856"/>
        <dbReference type="ChEBI" id="CHEBI:59789"/>
        <dbReference type="ChEBI" id="CHEBI:60063"/>
        <dbReference type="ChEBI" id="CHEBI:60064"/>
        <dbReference type="EC" id="2.1.1.195"/>
    </reaction>
</comment>
<comment type="pathway">
    <text evidence="1">Cofactor biosynthesis; adenosylcobalamin biosynthesis; cob(II)yrinate a,c-diamide from sirohydrochlorin (anaerobic route): step 6/10.</text>
</comment>
<comment type="similarity">
    <text evidence="1">Belongs to the CbiD family.</text>
</comment>
<name>CBID_THET2</name>
<protein>
    <recommendedName>
        <fullName evidence="1">Cobalt-precorrin-5B C(1)-methyltransferase</fullName>
        <ecNumber evidence="1">2.1.1.195</ecNumber>
    </recommendedName>
    <alternativeName>
        <fullName evidence="1">Cobalt-precorrin-6A synthase</fullName>
    </alternativeName>
</protein>
<keyword id="KW-0169">Cobalamin biosynthesis</keyword>
<keyword id="KW-0489">Methyltransferase</keyword>
<keyword id="KW-0614">Plasmid</keyword>
<keyword id="KW-0949">S-adenosyl-L-methionine</keyword>
<keyword id="KW-0808">Transferase</keyword>